<reference key="1">
    <citation type="submission" date="2006-09" db="EMBL/GenBank/DDBJ databases">
        <authorList>
            <consortium name="The Klebsiella pneumonia Genome Sequencing Project"/>
            <person name="McClelland M."/>
            <person name="Sanderson E.K."/>
            <person name="Spieth J."/>
            <person name="Clifton W.S."/>
            <person name="Latreille P."/>
            <person name="Sabo A."/>
            <person name="Pepin K."/>
            <person name="Bhonagiri V."/>
            <person name="Porwollik S."/>
            <person name="Ali J."/>
            <person name="Wilson R.K."/>
        </authorList>
    </citation>
    <scope>NUCLEOTIDE SEQUENCE [LARGE SCALE GENOMIC DNA]</scope>
    <source>
        <strain>ATCC 700721 / MGH 78578</strain>
    </source>
</reference>
<feature type="chain" id="PRO_1000085874" description="HTH-type transcriptional repressor PurR">
    <location>
        <begin position="1"/>
        <end position="341"/>
    </location>
</feature>
<feature type="domain" description="HTH lacI-type" evidence="1">
    <location>
        <begin position="2"/>
        <end position="56"/>
    </location>
</feature>
<feature type="DNA-binding region" description="H-T-H motif" evidence="1">
    <location>
        <begin position="4"/>
        <end position="23"/>
    </location>
</feature>
<feature type="DNA-binding region" evidence="1">
    <location>
        <begin position="48"/>
        <end position="56"/>
    </location>
</feature>
<feature type="binding site" evidence="1">
    <location>
        <position position="73"/>
    </location>
    <ligand>
        <name>hypoxanthine</name>
        <dbReference type="ChEBI" id="CHEBI:17368"/>
    </ligand>
</feature>
<feature type="binding site" evidence="1">
    <location>
        <position position="190"/>
    </location>
    <ligand>
        <name>hypoxanthine</name>
        <dbReference type="ChEBI" id="CHEBI:17368"/>
    </ligand>
</feature>
<feature type="binding site" evidence="1">
    <location>
        <position position="192"/>
    </location>
    <ligand>
        <name>hypoxanthine</name>
        <dbReference type="ChEBI" id="CHEBI:17368"/>
    </ligand>
</feature>
<feature type="binding site" evidence="1">
    <location>
        <position position="221"/>
    </location>
    <ligand>
        <name>hypoxanthine</name>
        <dbReference type="ChEBI" id="CHEBI:17368"/>
    </ligand>
</feature>
<feature type="binding site" evidence="1">
    <location>
        <position position="275"/>
    </location>
    <ligand>
        <name>hypoxanthine</name>
        <dbReference type="ChEBI" id="CHEBI:17368"/>
    </ligand>
</feature>
<sequence>MATIKDVAKRANVSTTTVSHVINKTRFVAEETRNAVWAAIKELHYSPSAVARSLKVNHTKSIGLLATSSEAAYFAEIIESVEKSCFQKGYTLILGNAWNDLEKQRAYLSMMAQKRVDGLLVMCSEYPDSVLSMLEEYRHIPMVVMDWGEAKADFTDAVIDNAFQGGYIAGRYLIERGHREIGVIPGPLERNTGAGRLAGFMQAMKEAHISVPENWIVQGDFEPESGYRAMQQILNQQHRPTAVFCGGDIMAMGAICAADEMGLRVPQDISLIGYDNVRNARYFSPALTTIHQPKDSLGEAAFNMLLDRIVNKREESQSIEVHPRLVERRSVADGPFVDYRR</sequence>
<comment type="function">
    <text evidence="1">Is the main repressor of the genes involved in the de novo synthesis of purine nucleotides, regulating purB, purC, purEK, purF, purHD, purL, purMN and guaBA expression. PurR is allosterically activated to bind its cognate DNA by binding the purine corepressors, hypoxanthine or guanine, thereby effecting transcription repression.</text>
</comment>
<comment type="pathway">
    <text>Purine metabolism; purine nucleotide biosynthesis [regulation].</text>
</comment>
<comment type="subunit">
    <text evidence="1">Homodimer.</text>
</comment>
<comment type="domain">
    <text evidence="1">Consists of two structural and functional domains: an N-terminal DNA-binding domain, approximately the first 60 residues, and a larger C-terminal domain, approximately 280 residues, which imparts the function of corepressor binding and oligomerization.</text>
</comment>
<gene>
    <name evidence="1" type="primary">purR</name>
    <name type="ordered locus">KPN78578_19660</name>
    <name type="ORF">KPN_01996</name>
</gene>
<organism>
    <name type="scientific">Klebsiella pneumoniae subsp. pneumoniae (strain ATCC 700721 / MGH 78578)</name>
    <dbReference type="NCBI Taxonomy" id="272620"/>
    <lineage>
        <taxon>Bacteria</taxon>
        <taxon>Pseudomonadati</taxon>
        <taxon>Pseudomonadota</taxon>
        <taxon>Gammaproteobacteria</taxon>
        <taxon>Enterobacterales</taxon>
        <taxon>Enterobacteriaceae</taxon>
        <taxon>Klebsiella/Raoultella group</taxon>
        <taxon>Klebsiella</taxon>
        <taxon>Klebsiella pneumoniae complex</taxon>
    </lineage>
</organism>
<protein>
    <recommendedName>
        <fullName evidence="1">HTH-type transcriptional repressor PurR</fullName>
    </recommendedName>
    <alternativeName>
        <fullName evidence="1">Pur regulon repressor</fullName>
    </alternativeName>
    <alternativeName>
        <fullName evidence="1">Purine nucleotide synthesis repressor</fullName>
    </alternativeName>
</protein>
<proteinExistence type="inferred from homology"/>
<dbReference type="EMBL" id="CP000647">
    <property type="protein sequence ID" value="ABR77427.1"/>
    <property type="molecule type" value="Genomic_DNA"/>
</dbReference>
<dbReference type="RefSeq" id="WP_002907778.1">
    <property type="nucleotide sequence ID" value="NC_009648.1"/>
</dbReference>
<dbReference type="SMR" id="A6TA06"/>
<dbReference type="STRING" id="272620.KPN_01996"/>
<dbReference type="PaxDb" id="272620-KPN_01996"/>
<dbReference type="EnsemblBacteria" id="ABR77427">
    <property type="protein sequence ID" value="ABR77427"/>
    <property type="gene ID" value="KPN_01996"/>
</dbReference>
<dbReference type="KEGG" id="kpn:KPN_01996"/>
<dbReference type="HOGENOM" id="CLU_037628_6_2_6"/>
<dbReference type="UniPathway" id="UPA00488"/>
<dbReference type="Proteomes" id="UP000000265">
    <property type="component" value="Chromosome"/>
</dbReference>
<dbReference type="GO" id="GO:0003700">
    <property type="term" value="F:DNA-binding transcription factor activity"/>
    <property type="evidence" value="ECO:0007669"/>
    <property type="project" value="TreeGrafter"/>
</dbReference>
<dbReference type="GO" id="GO:0000976">
    <property type="term" value="F:transcription cis-regulatory region binding"/>
    <property type="evidence" value="ECO:0007669"/>
    <property type="project" value="TreeGrafter"/>
</dbReference>
<dbReference type="GO" id="GO:0045892">
    <property type="term" value="P:negative regulation of DNA-templated transcription"/>
    <property type="evidence" value="ECO:0007669"/>
    <property type="project" value="UniProtKB-UniRule"/>
</dbReference>
<dbReference type="GO" id="GO:0006164">
    <property type="term" value="P:purine nucleotide biosynthetic process"/>
    <property type="evidence" value="ECO:0007669"/>
    <property type="project" value="UniProtKB-UniPathway"/>
</dbReference>
<dbReference type="CDD" id="cd01392">
    <property type="entry name" value="HTH_LacI"/>
    <property type="match status" value="1"/>
</dbReference>
<dbReference type="CDD" id="cd06275">
    <property type="entry name" value="PBP1_PurR"/>
    <property type="match status" value="1"/>
</dbReference>
<dbReference type="FunFam" id="1.10.260.40:FF:000002">
    <property type="entry name" value="HTH-type transcriptional repressor PurR"/>
    <property type="match status" value="1"/>
</dbReference>
<dbReference type="FunFam" id="3.40.50.2300:FF:000045">
    <property type="entry name" value="HTH-type transcriptional repressor PurR"/>
    <property type="match status" value="1"/>
</dbReference>
<dbReference type="Gene3D" id="3.40.50.2300">
    <property type="match status" value="2"/>
</dbReference>
<dbReference type="Gene3D" id="1.10.260.40">
    <property type="entry name" value="lambda repressor-like DNA-binding domains"/>
    <property type="match status" value="1"/>
</dbReference>
<dbReference type="HAMAP" id="MF_01277">
    <property type="entry name" value="HTH_type_PurR"/>
    <property type="match status" value="1"/>
</dbReference>
<dbReference type="InterPro" id="IPR000843">
    <property type="entry name" value="HTH_LacI"/>
</dbReference>
<dbReference type="InterPro" id="IPR046335">
    <property type="entry name" value="LacI/GalR-like_sensor"/>
</dbReference>
<dbReference type="InterPro" id="IPR010982">
    <property type="entry name" value="Lambda_DNA-bd_dom_sf"/>
</dbReference>
<dbReference type="InterPro" id="IPR028082">
    <property type="entry name" value="Peripla_BP_I"/>
</dbReference>
<dbReference type="InterPro" id="IPR023588">
    <property type="entry name" value="Tscrpt_reg_HTH_PurR"/>
</dbReference>
<dbReference type="NCBIfam" id="NF007979">
    <property type="entry name" value="PRK10703.1"/>
    <property type="match status" value="1"/>
</dbReference>
<dbReference type="PANTHER" id="PTHR30146:SF148">
    <property type="entry name" value="HTH-TYPE TRANSCRIPTIONAL REPRESSOR PURR-RELATED"/>
    <property type="match status" value="1"/>
</dbReference>
<dbReference type="PANTHER" id="PTHR30146">
    <property type="entry name" value="LACI-RELATED TRANSCRIPTIONAL REPRESSOR"/>
    <property type="match status" value="1"/>
</dbReference>
<dbReference type="Pfam" id="PF00356">
    <property type="entry name" value="LacI"/>
    <property type="match status" value="1"/>
</dbReference>
<dbReference type="Pfam" id="PF13377">
    <property type="entry name" value="Peripla_BP_3"/>
    <property type="match status" value="1"/>
</dbReference>
<dbReference type="PRINTS" id="PR00036">
    <property type="entry name" value="HTHLACI"/>
</dbReference>
<dbReference type="SMART" id="SM00354">
    <property type="entry name" value="HTH_LACI"/>
    <property type="match status" value="1"/>
</dbReference>
<dbReference type="SUPFAM" id="SSF47413">
    <property type="entry name" value="lambda repressor-like DNA-binding domains"/>
    <property type="match status" value="1"/>
</dbReference>
<dbReference type="SUPFAM" id="SSF53822">
    <property type="entry name" value="Periplasmic binding protein-like I"/>
    <property type="match status" value="1"/>
</dbReference>
<dbReference type="PROSITE" id="PS00356">
    <property type="entry name" value="HTH_LACI_1"/>
    <property type="match status" value="1"/>
</dbReference>
<dbReference type="PROSITE" id="PS50932">
    <property type="entry name" value="HTH_LACI_2"/>
    <property type="match status" value="1"/>
</dbReference>
<name>PURR_KLEP7</name>
<accession>A6TA06</accession>
<keyword id="KW-0238">DNA-binding</keyword>
<keyword id="KW-0658">Purine biosynthesis</keyword>
<keyword id="KW-0678">Repressor</keyword>
<keyword id="KW-0804">Transcription</keyword>
<keyword id="KW-0805">Transcription regulation</keyword>
<evidence type="ECO:0000255" key="1">
    <source>
        <dbReference type="HAMAP-Rule" id="MF_01277"/>
    </source>
</evidence>